<feature type="chain" id="PRO_0000186226" description="Putative BTB/POZ domain-containing protein L85">
    <location>
        <begin position="1"/>
        <end position="419"/>
    </location>
</feature>
<feature type="domain" description="BTB">
    <location>
        <begin position="16"/>
        <end position="89"/>
    </location>
</feature>
<feature type="region of interest" description="Disordered" evidence="1">
    <location>
        <begin position="250"/>
        <end position="290"/>
    </location>
</feature>
<feature type="compositionally biased region" description="Basic and acidic residues" evidence="1">
    <location>
        <begin position="263"/>
        <end position="290"/>
    </location>
</feature>
<name>YL085_MIMIV</name>
<organismHost>
    <name type="scientific">Acanthamoeba polyphaga</name>
    <name type="common">Amoeba</name>
    <dbReference type="NCBI Taxonomy" id="5757"/>
</organismHost>
<keyword id="KW-1185">Reference proteome</keyword>
<gene>
    <name type="ordered locus">MIMI_L85</name>
</gene>
<accession>Q5UPG1</accession>
<reference key="1">
    <citation type="journal article" date="2004" name="Science">
        <title>The 1.2-megabase genome sequence of Mimivirus.</title>
        <authorList>
            <person name="Raoult D."/>
            <person name="Audic S."/>
            <person name="Robert C."/>
            <person name="Abergel C."/>
            <person name="Renesto P."/>
            <person name="Ogata H."/>
            <person name="La Scola B."/>
            <person name="Susan M."/>
            <person name="Claverie J.-M."/>
        </authorList>
    </citation>
    <scope>NUCLEOTIDE SEQUENCE [LARGE SCALE GENOMIC DNA]</scope>
    <source>
        <strain>Rowbotham-Bradford</strain>
    </source>
</reference>
<proteinExistence type="inferred from homology"/>
<evidence type="ECO:0000256" key="1">
    <source>
        <dbReference type="SAM" id="MobiDB-lite"/>
    </source>
</evidence>
<evidence type="ECO:0000305" key="2"/>
<protein>
    <recommendedName>
        <fullName>Putative BTB/POZ domain-containing protein L85</fullName>
    </recommendedName>
</protein>
<organism>
    <name type="scientific">Acanthamoeba polyphaga mimivirus</name>
    <name type="common">APMV</name>
    <dbReference type="NCBI Taxonomy" id="212035"/>
    <lineage>
        <taxon>Viruses</taxon>
        <taxon>Varidnaviria</taxon>
        <taxon>Bamfordvirae</taxon>
        <taxon>Nucleocytoviricota</taxon>
        <taxon>Megaviricetes</taxon>
        <taxon>Imitervirales</taxon>
        <taxon>Mimiviridae</taxon>
        <taxon>Megamimivirinae</taxon>
        <taxon>Mimivirus</taxon>
        <taxon>Mimivirus bradfordmassiliense</taxon>
    </lineage>
</organism>
<dbReference type="EMBL" id="AY653733">
    <property type="protein sequence ID" value="AAV50360.1"/>
    <property type="molecule type" value="Genomic_DNA"/>
</dbReference>
<dbReference type="KEGG" id="vg:9924683"/>
<dbReference type="OrthoDB" id="7868at10239"/>
<dbReference type="Proteomes" id="UP000001134">
    <property type="component" value="Genome"/>
</dbReference>
<dbReference type="Gene3D" id="3.30.710.10">
    <property type="entry name" value="Potassium Channel Kv1.1, Chain A"/>
    <property type="match status" value="1"/>
</dbReference>
<dbReference type="InterPro" id="IPR000210">
    <property type="entry name" value="BTB/POZ_dom"/>
</dbReference>
<dbReference type="InterPro" id="IPR011333">
    <property type="entry name" value="SKP1/BTB/POZ_sf"/>
</dbReference>
<dbReference type="InterPro" id="IPR036322">
    <property type="entry name" value="WD40_repeat_dom_sf"/>
</dbReference>
<dbReference type="Pfam" id="PF00651">
    <property type="entry name" value="BTB"/>
    <property type="match status" value="1"/>
</dbReference>
<dbReference type="SUPFAM" id="SSF50978">
    <property type="entry name" value="WD40 repeat-like"/>
    <property type="match status" value="1"/>
</dbReference>
<sequence length="419" mass="49290">MLINKFKKDLKLKEYTDLTIVLKDDTCEIEMNVHKTVICIMCKYFENFIKFNSQTEKKSNDKLTVIVPNALITRDIIRNFYDKTSTNSEYPLWRYTLEKIMCRDFLMLDYDSEIIKDLEKIPSEGITLFLEVLSITNYEFSLMTLLKKNISKGYNFKNIPSKIIDELYSYTKPNIIVCMGNENNLELWNIETNKLINNIKLDKPFHHTTNIVCSQNESIIAISDGQTFGLINVLKNTCIYKTYQSKIKYSSSNDSDEDASETESEHNSETESEHNSETESEHNSETESKHNLETKIDLKYNVGNFIKFSRSHNKIIFERDNEIFLWKIIFFPNYECSSYDYNKKKYGCDYYNSYDKKKYKCVVNIDGFPNDKLLYAKKINNFNPKHIYTIYGIKGNEQKTIIFDVPIKIAKYLPMVKIS</sequence>
<comment type="similarity">
    <text evidence="2">Belongs to the mimivirus BTB/WD family.</text>
</comment>